<dbReference type="EMBL" id="CH473957">
    <property type="protein sequence ID" value="EDL91413.1"/>
    <property type="molecule type" value="Genomic_DNA"/>
</dbReference>
<dbReference type="EMBL" id="BC160902">
    <property type="protein sequence ID" value="AAI60902.1"/>
    <property type="molecule type" value="mRNA"/>
</dbReference>
<dbReference type="RefSeq" id="NP_001102720.2">
    <property type="nucleotide sequence ID" value="NM_001109250.3"/>
</dbReference>
<dbReference type="RefSeq" id="XP_006236994.1">
    <property type="nucleotide sequence ID" value="XM_006236932.4"/>
</dbReference>
<dbReference type="RefSeq" id="XP_038964124.1">
    <property type="nucleotide sequence ID" value="XM_039108196.2"/>
</dbReference>
<dbReference type="SMR" id="B1H285"/>
<dbReference type="BioGRID" id="271570">
    <property type="interactions" value="1"/>
</dbReference>
<dbReference type="FunCoup" id="B1H285">
    <property type="interactions" value="616"/>
</dbReference>
<dbReference type="STRING" id="10116.ENSRNOP00000017889"/>
<dbReference type="PhosphoSitePlus" id="B1H285"/>
<dbReference type="PaxDb" id="10116-ENSRNOP00000017889"/>
<dbReference type="GeneID" id="500262"/>
<dbReference type="KEGG" id="rno:500262"/>
<dbReference type="UCSC" id="RGD:1563166">
    <property type="organism name" value="rat"/>
</dbReference>
<dbReference type="AGR" id="RGD:1563166"/>
<dbReference type="CTD" id="84541"/>
<dbReference type="RGD" id="1563166">
    <property type="gene designation" value="Kbtbd8"/>
</dbReference>
<dbReference type="eggNOG" id="KOG4441">
    <property type="taxonomic scope" value="Eukaryota"/>
</dbReference>
<dbReference type="InParanoid" id="B1H285"/>
<dbReference type="OrthoDB" id="45365at2759"/>
<dbReference type="PhylomeDB" id="B1H285"/>
<dbReference type="Reactome" id="R-RNO-8951664">
    <property type="pathway name" value="Neddylation"/>
</dbReference>
<dbReference type="Reactome" id="R-RNO-983168">
    <property type="pathway name" value="Antigen processing: Ubiquitination &amp; Proteasome degradation"/>
</dbReference>
<dbReference type="PRO" id="PR:B1H285"/>
<dbReference type="Proteomes" id="UP000002494">
    <property type="component" value="Unplaced"/>
</dbReference>
<dbReference type="Proteomes" id="UP000234681">
    <property type="component" value="Chromosome 4"/>
</dbReference>
<dbReference type="GO" id="GO:0031463">
    <property type="term" value="C:Cul3-RING ubiquitin ligase complex"/>
    <property type="evidence" value="ECO:0000250"/>
    <property type="project" value="UniProtKB"/>
</dbReference>
<dbReference type="GO" id="GO:0005737">
    <property type="term" value="C:cytoplasm"/>
    <property type="evidence" value="ECO:0000318"/>
    <property type="project" value="GO_Central"/>
</dbReference>
<dbReference type="GO" id="GO:0005794">
    <property type="term" value="C:Golgi apparatus"/>
    <property type="evidence" value="ECO:0007669"/>
    <property type="project" value="UniProtKB-SubCell"/>
</dbReference>
<dbReference type="GO" id="GO:0005819">
    <property type="term" value="C:spindle"/>
    <property type="evidence" value="ECO:0007669"/>
    <property type="project" value="UniProtKB-SubCell"/>
</dbReference>
<dbReference type="GO" id="GO:1990756">
    <property type="term" value="F:ubiquitin-like ligase-substrate adaptor activity"/>
    <property type="evidence" value="ECO:0000318"/>
    <property type="project" value="GO_Central"/>
</dbReference>
<dbReference type="GO" id="GO:0014032">
    <property type="term" value="P:neural crest cell development"/>
    <property type="evidence" value="ECO:0000250"/>
    <property type="project" value="UniProtKB"/>
</dbReference>
<dbReference type="GO" id="GO:0014029">
    <property type="term" value="P:neural crest formation"/>
    <property type="evidence" value="ECO:0000250"/>
    <property type="project" value="UniProtKB"/>
</dbReference>
<dbReference type="GO" id="GO:0043161">
    <property type="term" value="P:proteasome-mediated ubiquitin-dependent protein catabolic process"/>
    <property type="evidence" value="ECO:0000318"/>
    <property type="project" value="GO_Central"/>
</dbReference>
<dbReference type="GO" id="GO:0006513">
    <property type="term" value="P:protein monoubiquitination"/>
    <property type="evidence" value="ECO:0000250"/>
    <property type="project" value="UniProtKB"/>
</dbReference>
<dbReference type="GO" id="GO:0006417">
    <property type="term" value="P:regulation of translation"/>
    <property type="evidence" value="ECO:0007669"/>
    <property type="project" value="UniProtKB-KW"/>
</dbReference>
<dbReference type="CDD" id="cd18274">
    <property type="entry name" value="BTB_POZ_KBTBD8"/>
    <property type="match status" value="1"/>
</dbReference>
<dbReference type="FunFam" id="3.30.710.10:FF:000006">
    <property type="entry name" value="Kelch repeat and BTB domain-containing 6"/>
    <property type="match status" value="1"/>
</dbReference>
<dbReference type="FunFam" id="2.120.10.80:FF:000020">
    <property type="entry name" value="Kelch repeat and BTB domain-containing protein 8"/>
    <property type="match status" value="1"/>
</dbReference>
<dbReference type="FunFam" id="1.25.40.420:FF:000014">
    <property type="entry name" value="kelch repeat and BTB domain-containing protein 8"/>
    <property type="match status" value="1"/>
</dbReference>
<dbReference type="Gene3D" id="1.25.40.420">
    <property type="match status" value="1"/>
</dbReference>
<dbReference type="Gene3D" id="2.120.10.80">
    <property type="entry name" value="Kelch-type beta propeller"/>
    <property type="match status" value="1"/>
</dbReference>
<dbReference type="Gene3D" id="3.30.710.10">
    <property type="entry name" value="Potassium Channel Kv1.1, Chain A"/>
    <property type="match status" value="1"/>
</dbReference>
<dbReference type="InterPro" id="IPR011705">
    <property type="entry name" value="BACK"/>
</dbReference>
<dbReference type="InterPro" id="IPR000210">
    <property type="entry name" value="BTB/POZ_dom"/>
</dbReference>
<dbReference type="InterPro" id="IPR028764">
    <property type="entry name" value="BTB/POZ_KBTBD8"/>
</dbReference>
<dbReference type="InterPro" id="IPR015915">
    <property type="entry name" value="Kelch-typ_b-propeller"/>
</dbReference>
<dbReference type="InterPro" id="IPR006652">
    <property type="entry name" value="Kelch_1"/>
</dbReference>
<dbReference type="InterPro" id="IPR011333">
    <property type="entry name" value="SKP1/BTB/POZ_sf"/>
</dbReference>
<dbReference type="PANTHER" id="PTHR24412">
    <property type="entry name" value="KELCH PROTEIN"/>
    <property type="match status" value="1"/>
</dbReference>
<dbReference type="PANTHER" id="PTHR24412:SF433">
    <property type="entry name" value="KELCH REPEAT AND BTB DOMAIN-CONTAINING PROTEIN 8"/>
    <property type="match status" value="1"/>
</dbReference>
<dbReference type="Pfam" id="PF07707">
    <property type="entry name" value="BACK"/>
    <property type="match status" value="1"/>
</dbReference>
<dbReference type="Pfam" id="PF00651">
    <property type="entry name" value="BTB"/>
    <property type="match status" value="1"/>
</dbReference>
<dbReference type="Pfam" id="PF01344">
    <property type="entry name" value="Kelch_1"/>
    <property type="match status" value="3"/>
</dbReference>
<dbReference type="SMART" id="SM00875">
    <property type="entry name" value="BACK"/>
    <property type="match status" value="1"/>
</dbReference>
<dbReference type="SMART" id="SM00225">
    <property type="entry name" value="BTB"/>
    <property type="match status" value="1"/>
</dbReference>
<dbReference type="SMART" id="SM00612">
    <property type="entry name" value="Kelch"/>
    <property type="match status" value="3"/>
</dbReference>
<dbReference type="SUPFAM" id="SSF117281">
    <property type="entry name" value="Kelch motif"/>
    <property type="match status" value="1"/>
</dbReference>
<dbReference type="SUPFAM" id="SSF54695">
    <property type="entry name" value="POZ domain"/>
    <property type="match status" value="1"/>
</dbReference>
<dbReference type="PROSITE" id="PS50097">
    <property type="entry name" value="BTB"/>
    <property type="match status" value="1"/>
</dbReference>
<sequence length="575" mass="66322">MDPFHACSILKQLKTMYDEGQLTDIVVEVDHGKTFSCHRNVLAAISPYFRSMFTSGLTESTQKEVRIIGVEAESMGLVLNYAYTSRVILTEANVQALFTTASIFQIPSIQDQCAKYMISHLDPQNSIGVFIFADHYGHQELGDRSKEYIRKKFLCVTKEQEFLQLTKDQLISILDSDDLNVDREEHVYESIIRWFEHEQNEREVHLPEIFAKCIRFPLMEDAFIEKIPPRFAQAIVKSCGEKGPSNTNGCTQRLGMTASEMIICFDAAHKHSGKKQTVPCLDIVTGRVFKLCKPPNDLREVGILVSPDNDIYIAGGYRPSSSEVSIDHKAENDFWMYDHSTNRWLSKPSLLRARIGCKLVYCCGKMYAIGGRVYEGDGRNSLKSVECYDSRENCWMTVCAMPVAMEFHNAVEHKEKIYVLQGEFFLFYEPQKDYWGFLTPMTVPRIQGLAAVYKDSIYYIAGTCGNHQRVFTVEAYDIELNKWTRKKDFPCDQSINPYLKLVLFQNKLHLFVRATQVTVEEHIFRTSRKNSLYQYDDIADQWMKVYETPDRLWDLGRHFECAVAKLYPQCLQKVL</sequence>
<keyword id="KW-0963">Cytoplasm</keyword>
<keyword id="KW-0206">Cytoskeleton</keyword>
<keyword id="KW-0333">Golgi apparatus</keyword>
<keyword id="KW-0880">Kelch repeat</keyword>
<keyword id="KW-1185">Reference proteome</keyword>
<keyword id="KW-0677">Repeat</keyword>
<keyword id="KW-0810">Translation regulation</keyword>
<keyword id="KW-0833">Ubl conjugation pathway</keyword>
<feature type="chain" id="PRO_0000393570" description="Kelch repeat and BTB domain-containing protein 8">
    <location>
        <begin position="1"/>
        <end position="575"/>
    </location>
</feature>
<feature type="domain" description="BTB" evidence="3">
    <location>
        <begin position="23"/>
        <end position="91"/>
    </location>
</feature>
<feature type="domain" description="BACK" evidence="2">
    <location>
        <begin position="126"/>
        <end position="228"/>
    </location>
</feature>
<feature type="repeat" description="Kelch 1" evidence="2">
    <location>
        <begin position="310"/>
        <end position="364"/>
    </location>
</feature>
<feature type="repeat" description="Kelch 2" evidence="2">
    <location>
        <begin position="365"/>
        <end position="415"/>
    </location>
</feature>
<feature type="repeat" description="Kelch 3" evidence="2">
    <location>
        <begin position="417"/>
        <end position="455"/>
    </location>
</feature>
<feature type="repeat" description="Kelch 4" evidence="2">
    <location>
        <begin position="457"/>
        <end position="506"/>
    </location>
</feature>
<feature type="repeat" description="Kelch 5" evidence="2">
    <location>
        <begin position="516"/>
        <end position="562"/>
    </location>
</feature>
<name>KBTB8_RAT</name>
<comment type="function">
    <text evidence="1">Substrate-specific adapter of a BCR (BTB-CUL3-RBX1) E3 ubiquitin ligase complex that acts as a regulator of neural crest specification. The BCR(KBTBD8) complex acts by mediating monoubiquitination of NOLC1 and TCOF1: monoubiquitination promotes the formation of a NOLC1-TCOF1 complex that acts as a platform to connect RNA polymerase I with enzymes responsible for ribosomal processing and modification, leading to remodel the translational program of differentiating cells in favor of neural crest specification.</text>
</comment>
<comment type="subunit">
    <text evidence="1">Component of the BCR(KBTBD8) E3 ubiquitin ligase complex, at least composed of CUL3, KBTBD8 and RBX1.</text>
</comment>
<comment type="subcellular location">
    <subcellularLocation>
        <location evidence="1">Cytoplasm</location>
        <location evidence="1">Cytoskeleton</location>
        <location evidence="1">Spindle</location>
    </subcellularLocation>
    <subcellularLocation>
        <location evidence="1">Golgi apparatus</location>
    </subcellularLocation>
    <text evidence="1">Translocates to the spindle apparatus during mitosis.</text>
</comment>
<comment type="similarity">
    <text evidence="4">Belongs to the KBTBD8 family.</text>
</comment>
<evidence type="ECO:0000250" key="1">
    <source>
        <dbReference type="UniProtKB" id="Q8NFY9"/>
    </source>
</evidence>
<evidence type="ECO:0000255" key="2"/>
<evidence type="ECO:0000255" key="3">
    <source>
        <dbReference type="PROSITE-ProRule" id="PRU00037"/>
    </source>
</evidence>
<evidence type="ECO:0000305" key="4"/>
<evidence type="ECO:0000312" key="5">
    <source>
        <dbReference type="EMBL" id="AAI60902.1"/>
    </source>
</evidence>
<evidence type="ECO:0000312" key="6">
    <source>
        <dbReference type="EMBL" id="EDL91413.1"/>
    </source>
</evidence>
<evidence type="ECO:0000312" key="7">
    <source>
        <dbReference type="RGD" id="1563166"/>
    </source>
</evidence>
<gene>
    <name evidence="5 7" type="primary">Kbtbd8</name>
</gene>
<reference evidence="6" key="1">
    <citation type="submission" date="2005-07" db="EMBL/GenBank/DDBJ databases">
        <authorList>
            <person name="Mural R.J."/>
            <person name="Adams M.D."/>
            <person name="Myers E.W."/>
            <person name="Smith H.O."/>
            <person name="Venter J.C."/>
        </authorList>
    </citation>
    <scope>NUCLEOTIDE SEQUENCE [LARGE SCALE GENOMIC DNA]</scope>
</reference>
<reference evidence="5" key="2">
    <citation type="journal article" date="2004" name="Genome Res.">
        <title>The status, quality, and expansion of the NIH full-length cDNA project: the Mammalian Gene Collection (MGC).</title>
        <authorList>
            <consortium name="The MGC Project Team"/>
        </authorList>
    </citation>
    <scope>NUCLEOTIDE SEQUENCE [LARGE SCALE MRNA]</scope>
    <source>
        <strain evidence="5">Brown Norway</strain>
        <tissue evidence="5">Testis</tissue>
    </source>
</reference>
<proteinExistence type="evidence at transcript level"/>
<organism>
    <name type="scientific">Rattus norvegicus</name>
    <name type="common">Rat</name>
    <dbReference type="NCBI Taxonomy" id="10116"/>
    <lineage>
        <taxon>Eukaryota</taxon>
        <taxon>Metazoa</taxon>
        <taxon>Chordata</taxon>
        <taxon>Craniata</taxon>
        <taxon>Vertebrata</taxon>
        <taxon>Euteleostomi</taxon>
        <taxon>Mammalia</taxon>
        <taxon>Eutheria</taxon>
        <taxon>Euarchontoglires</taxon>
        <taxon>Glires</taxon>
        <taxon>Rodentia</taxon>
        <taxon>Myomorpha</taxon>
        <taxon>Muroidea</taxon>
        <taxon>Muridae</taxon>
        <taxon>Murinae</taxon>
        <taxon>Rattus</taxon>
    </lineage>
</organism>
<protein>
    <recommendedName>
        <fullName evidence="1">Kelch repeat and BTB domain-containing protein 8</fullName>
    </recommendedName>
</protein>
<accession>B1H285</accession>